<gene>
    <name evidence="1" type="primary">azoR1</name>
    <name type="ordered locus">Bcep18194_B0245</name>
</gene>
<evidence type="ECO:0000255" key="1">
    <source>
        <dbReference type="HAMAP-Rule" id="MF_01216"/>
    </source>
</evidence>
<organism>
    <name type="scientific">Burkholderia lata (strain ATCC 17760 / DSM 23089 / LMG 22485 / NCIMB 9086 / R18194 / 383)</name>
    <dbReference type="NCBI Taxonomy" id="482957"/>
    <lineage>
        <taxon>Bacteria</taxon>
        <taxon>Pseudomonadati</taxon>
        <taxon>Pseudomonadota</taxon>
        <taxon>Betaproteobacteria</taxon>
        <taxon>Burkholderiales</taxon>
        <taxon>Burkholderiaceae</taxon>
        <taxon>Burkholderia</taxon>
        <taxon>Burkholderia cepacia complex</taxon>
    </lineage>
</organism>
<accession>Q39B00</accession>
<dbReference type="EC" id="1.6.5.-" evidence="1"/>
<dbReference type="EC" id="1.7.1.17" evidence="1"/>
<dbReference type="EMBL" id="CP000152">
    <property type="protein sequence ID" value="ABB10361.1"/>
    <property type="molecule type" value="Genomic_DNA"/>
</dbReference>
<dbReference type="RefSeq" id="WP_011353859.1">
    <property type="nucleotide sequence ID" value="NC_007511.1"/>
</dbReference>
<dbReference type="SMR" id="Q39B00"/>
<dbReference type="GeneID" id="45096631"/>
<dbReference type="KEGG" id="bur:Bcep18194_B0245"/>
<dbReference type="PATRIC" id="fig|482957.22.peg.3824"/>
<dbReference type="HOGENOM" id="CLU_088964_0_0_4"/>
<dbReference type="Proteomes" id="UP000002705">
    <property type="component" value="Chromosome 2"/>
</dbReference>
<dbReference type="GO" id="GO:0009055">
    <property type="term" value="F:electron transfer activity"/>
    <property type="evidence" value="ECO:0007669"/>
    <property type="project" value="UniProtKB-UniRule"/>
</dbReference>
<dbReference type="GO" id="GO:0010181">
    <property type="term" value="F:FMN binding"/>
    <property type="evidence" value="ECO:0007669"/>
    <property type="project" value="UniProtKB-UniRule"/>
</dbReference>
<dbReference type="GO" id="GO:0016652">
    <property type="term" value="F:oxidoreductase activity, acting on NAD(P)H as acceptor"/>
    <property type="evidence" value="ECO:0007669"/>
    <property type="project" value="UniProtKB-UniRule"/>
</dbReference>
<dbReference type="GO" id="GO:0016655">
    <property type="term" value="F:oxidoreductase activity, acting on NAD(P)H, quinone or similar compound as acceptor"/>
    <property type="evidence" value="ECO:0007669"/>
    <property type="project" value="InterPro"/>
</dbReference>
<dbReference type="Gene3D" id="3.40.50.360">
    <property type="match status" value="1"/>
</dbReference>
<dbReference type="HAMAP" id="MF_01216">
    <property type="entry name" value="Azoreductase_type1"/>
    <property type="match status" value="1"/>
</dbReference>
<dbReference type="InterPro" id="IPR003680">
    <property type="entry name" value="Flavodoxin_fold"/>
</dbReference>
<dbReference type="InterPro" id="IPR029039">
    <property type="entry name" value="Flavoprotein-like_sf"/>
</dbReference>
<dbReference type="InterPro" id="IPR050104">
    <property type="entry name" value="FMN-dep_NADH:Q_OxRdtase_AzoR1"/>
</dbReference>
<dbReference type="InterPro" id="IPR023048">
    <property type="entry name" value="NADH:quinone_OxRdtase_FMN_depd"/>
</dbReference>
<dbReference type="PANTHER" id="PTHR43741">
    <property type="entry name" value="FMN-DEPENDENT NADH-AZOREDUCTASE 1"/>
    <property type="match status" value="1"/>
</dbReference>
<dbReference type="PANTHER" id="PTHR43741:SF2">
    <property type="entry name" value="FMN-DEPENDENT NADH:QUINONE OXIDOREDUCTASE"/>
    <property type="match status" value="1"/>
</dbReference>
<dbReference type="Pfam" id="PF02525">
    <property type="entry name" value="Flavodoxin_2"/>
    <property type="match status" value="1"/>
</dbReference>
<dbReference type="SUPFAM" id="SSF52218">
    <property type="entry name" value="Flavoproteins"/>
    <property type="match status" value="1"/>
</dbReference>
<sequence length="206" mass="22080">MSRILLITSSPRSTDSLSTRFAHDLARQLAARDAAGAVTLRDLSNDPLPHIDDAYIVGRMLPSDARSAEQAQAVELAQALVDELRAADIVVIGSAMTNFGPSTQLRAWFDRVIWPQVTFRYGESGVAGTLEGKQVYLVTASGGIFSEGPYAPFDYQSGYLKHLLGFIGMTDIREVRVEGTVLGAEAVQAAIAKAGQELQALVEQAG</sequence>
<keyword id="KW-0285">Flavoprotein</keyword>
<keyword id="KW-0288">FMN</keyword>
<keyword id="KW-0520">NAD</keyword>
<keyword id="KW-0560">Oxidoreductase</keyword>
<reference key="1">
    <citation type="submission" date="2005-10" db="EMBL/GenBank/DDBJ databases">
        <title>Complete sequence of chromosome 2 of Burkholderia sp. 383.</title>
        <authorList>
            <consortium name="US DOE Joint Genome Institute"/>
            <person name="Copeland A."/>
            <person name="Lucas S."/>
            <person name="Lapidus A."/>
            <person name="Barry K."/>
            <person name="Detter J.C."/>
            <person name="Glavina T."/>
            <person name="Hammon N."/>
            <person name="Israni S."/>
            <person name="Pitluck S."/>
            <person name="Chain P."/>
            <person name="Malfatti S."/>
            <person name="Shin M."/>
            <person name="Vergez L."/>
            <person name="Schmutz J."/>
            <person name="Larimer F."/>
            <person name="Land M."/>
            <person name="Kyrpides N."/>
            <person name="Lykidis A."/>
            <person name="Richardson P."/>
        </authorList>
    </citation>
    <scope>NUCLEOTIDE SEQUENCE [LARGE SCALE GENOMIC DNA]</scope>
    <source>
        <strain>ATCC 17760 / DSM 23089 / LMG 22485 / NCIMB 9086 / R18194 / 383</strain>
    </source>
</reference>
<proteinExistence type="inferred from homology"/>
<feature type="chain" id="PRO_0000245901" description="FMN-dependent NADH:quinone oxidoreductase 1">
    <location>
        <begin position="1"/>
        <end position="206"/>
    </location>
</feature>
<feature type="binding site" evidence="1">
    <location>
        <position position="10"/>
    </location>
    <ligand>
        <name>FMN</name>
        <dbReference type="ChEBI" id="CHEBI:58210"/>
    </ligand>
</feature>
<feature type="binding site" evidence="1">
    <location>
        <begin position="16"/>
        <end position="18"/>
    </location>
    <ligand>
        <name>FMN</name>
        <dbReference type="ChEBI" id="CHEBI:58210"/>
    </ligand>
</feature>
<comment type="function">
    <text evidence="1">Quinone reductase that provides resistance to thiol-specific stress caused by electrophilic quinones.</text>
</comment>
<comment type="function">
    <text evidence="1">Also exhibits azoreductase activity. Catalyzes the reductive cleavage of the azo bond in aromatic azo compounds to the corresponding amines.</text>
</comment>
<comment type="catalytic activity">
    <reaction evidence="1">
        <text>2 a quinone + NADH + H(+) = 2 a 1,4-benzosemiquinone + NAD(+)</text>
        <dbReference type="Rhea" id="RHEA:65952"/>
        <dbReference type="ChEBI" id="CHEBI:15378"/>
        <dbReference type="ChEBI" id="CHEBI:57540"/>
        <dbReference type="ChEBI" id="CHEBI:57945"/>
        <dbReference type="ChEBI" id="CHEBI:132124"/>
        <dbReference type="ChEBI" id="CHEBI:134225"/>
    </reaction>
</comment>
<comment type="catalytic activity">
    <reaction evidence="1">
        <text>N,N-dimethyl-1,4-phenylenediamine + anthranilate + 2 NAD(+) = 2-(4-dimethylaminophenyl)diazenylbenzoate + 2 NADH + 2 H(+)</text>
        <dbReference type="Rhea" id="RHEA:55872"/>
        <dbReference type="ChEBI" id="CHEBI:15378"/>
        <dbReference type="ChEBI" id="CHEBI:15783"/>
        <dbReference type="ChEBI" id="CHEBI:16567"/>
        <dbReference type="ChEBI" id="CHEBI:57540"/>
        <dbReference type="ChEBI" id="CHEBI:57945"/>
        <dbReference type="ChEBI" id="CHEBI:71579"/>
        <dbReference type="EC" id="1.7.1.17"/>
    </reaction>
</comment>
<comment type="cofactor">
    <cofactor evidence="1">
        <name>FMN</name>
        <dbReference type="ChEBI" id="CHEBI:58210"/>
    </cofactor>
    <text evidence="1">Binds 1 FMN per subunit.</text>
</comment>
<comment type="subunit">
    <text evidence="1">Homodimer.</text>
</comment>
<comment type="similarity">
    <text evidence="1">Belongs to the azoreductase type 1 family.</text>
</comment>
<protein>
    <recommendedName>
        <fullName evidence="1">FMN-dependent NADH:quinone oxidoreductase 1</fullName>
        <ecNumber evidence="1">1.6.5.-</ecNumber>
    </recommendedName>
    <alternativeName>
        <fullName evidence="1">Azo-dye reductase 1</fullName>
    </alternativeName>
    <alternativeName>
        <fullName evidence="1">FMN-dependent NADH-azo compound oxidoreductase 1</fullName>
    </alternativeName>
    <alternativeName>
        <fullName evidence="1">FMN-dependent NADH-azoreductase 1</fullName>
        <ecNumber evidence="1">1.7.1.17</ecNumber>
    </alternativeName>
</protein>
<name>AZOR1_BURL3</name>